<gene>
    <name evidence="1" type="primary">glmM</name>
    <name type="ordered locus">Neut_1000</name>
</gene>
<sequence length="458" mass="50040">MKKKYFGTDGIRGKVGEFPITPEFFLRLGYAVGKVLLASDWKLAADKRPTILIGKDTRISGYMLESALEAGFSAAGVDVLLSGPLPTPAVAYLVRALRIQAGAVISASHNPFYDNGIKFFSSEGSKLPDSMELQIEAELDFPIETAPSIKLGRVQRLKDEEGRYIEFCKSTFPNQLDLRGWKIVVDCANGADYQVAGHVMHELGADVVTIHANPDGFNINHECGATHIMTLQGAVLQHGADFGIAVDGDGDRVLMVSGEGVVYDGDSLAYIIAKHRQQRGVLQGGVVGTLMTNLAVEQAFERIGIPFARANVGDRYVSELLQQNDWYLGAENSGHIICRDKHTTGDGIISALQVLYALRDTGLMFADLMHDVTFFPQRLINVKISRDFDFQNDQAVEICKNEAEQALGNDGRILLRASGTEPLIRVMVEGKDPQQIEYWAEKIAGTIQQQAVASTVGH</sequence>
<dbReference type="EC" id="5.4.2.10" evidence="1"/>
<dbReference type="EMBL" id="CP000450">
    <property type="protein sequence ID" value="ABI59259.1"/>
    <property type="molecule type" value="Genomic_DNA"/>
</dbReference>
<dbReference type="RefSeq" id="WP_011634082.1">
    <property type="nucleotide sequence ID" value="NC_008344.1"/>
</dbReference>
<dbReference type="SMR" id="Q0AHC3"/>
<dbReference type="STRING" id="335283.Neut_1000"/>
<dbReference type="KEGG" id="net:Neut_1000"/>
<dbReference type="eggNOG" id="COG1109">
    <property type="taxonomic scope" value="Bacteria"/>
</dbReference>
<dbReference type="HOGENOM" id="CLU_016950_7_0_4"/>
<dbReference type="OrthoDB" id="9803322at2"/>
<dbReference type="Proteomes" id="UP000001966">
    <property type="component" value="Chromosome"/>
</dbReference>
<dbReference type="GO" id="GO:0005829">
    <property type="term" value="C:cytosol"/>
    <property type="evidence" value="ECO:0007669"/>
    <property type="project" value="TreeGrafter"/>
</dbReference>
<dbReference type="GO" id="GO:0000287">
    <property type="term" value="F:magnesium ion binding"/>
    <property type="evidence" value="ECO:0007669"/>
    <property type="project" value="UniProtKB-UniRule"/>
</dbReference>
<dbReference type="GO" id="GO:0008966">
    <property type="term" value="F:phosphoglucosamine mutase activity"/>
    <property type="evidence" value="ECO:0007669"/>
    <property type="project" value="UniProtKB-UniRule"/>
</dbReference>
<dbReference type="GO" id="GO:0004615">
    <property type="term" value="F:phosphomannomutase activity"/>
    <property type="evidence" value="ECO:0007669"/>
    <property type="project" value="TreeGrafter"/>
</dbReference>
<dbReference type="GO" id="GO:0005975">
    <property type="term" value="P:carbohydrate metabolic process"/>
    <property type="evidence" value="ECO:0007669"/>
    <property type="project" value="InterPro"/>
</dbReference>
<dbReference type="GO" id="GO:0009252">
    <property type="term" value="P:peptidoglycan biosynthetic process"/>
    <property type="evidence" value="ECO:0007669"/>
    <property type="project" value="TreeGrafter"/>
</dbReference>
<dbReference type="GO" id="GO:0006048">
    <property type="term" value="P:UDP-N-acetylglucosamine biosynthetic process"/>
    <property type="evidence" value="ECO:0007669"/>
    <property type="project" value="TreeGrafter"/>
</dbReference>
<dbReference type="CDD" id="cd05802">
    <property type="entry name" value="GlmM"/>
    <property type="match status" value="1"/>
</dbReference>
<dbReference type="FunFam" id="3.30.310.50:FF:000001">
    <property type="entry name" value="Phosphoglucosamine mutase"/>
    <property type="match status" value="1"/>
</dbReference>
<dbReference type="FunFam" id="3.40.120.10:FF:000001">
    <property type="entry name" value="Phosphoglucosamine mutase"/>
    <property type="match status" value="1"/>
</dbReference>
<dbReference type="FunFam" id="3.40.120.10:FF:000002">
    <property type="entry name" value="Phosphoglucosamine mutase"/>
    <property type="match status" value="1"/>
</dbReference>
<dbReference type="Gene3D" id="3.40.120.10">
    <property type="entry name" value="Alpha-D-Glucose-1,6-Bisphosphate, subunit A, domain 3"/>
    <property type="match status" value="3"/>
</dbReference>
<dbReference type="Gene3D" id="3.30.310.50">
    <property type="entry name" value="Alpha-D-phosphohexomutase, C-terminal domain"/>
    <property type="match status" value="1"/>
</dbReference>
<dbReference type="HAMAP" id="MF_01554_B">
    <property type="entry name" value="GlmM_B"/>
    <property type="match status" value="1"/>
</dbReference>
<dbReference type="InterPro" id="IPR005844">
    <property type="entry name" value="A-D-PHexomutase_a/b/a-I"/>
</dbReference>
<dbReference type="InterPro" id="IPR016055">
    <property type="entry name" value="A-D-PHexomutase_a/b/a-I/II/III"/>
</dbReference>
<dbReference type="InterPro" id="IPR005845">
    <property type="entry name" value="A-D-PHexomutase_a/b/a-II"/>
</dbReference>
<dbReference type="InterPro" id="IPR005846">
    <property type="entry name" value="A-D-PHexomutase_a/b/a-III"/>
</dbReference>
<dbReference type="InterPro" id="IPR005843">
    <property type="entry name" value="A-D-PHexomutase_C"/>
</dbReference>
<dbReference type="InterPro" id="IPR036900">
    <property type="entry name" value="A-D-PHexomutase_C_sf"/>
</dbReference>
<dbReference type="InterPro" id="IPR005841">
    <property type="entry name" value="Alpha-D-phosphohexomutase_SF"/>
</dbReference>
<dbReference type="InterPro" id="IPR006352">
    <property type="entry name" value="GlmM_bact"/>
</dbReference>
<dbReference type="InterPro" id="IPR050060">
    <property type="entry name" value="Phosphoglucosamine_mutase"/>
</dbReference>
<dbReference type="NCBIfam" id="TIGR01455">
    <property type="entry name" value="glmM"/>
    <property type="match status" value="1"/>
</dbReference>
<dbReference type="NCBIfam" id="NF008139">
    <property type="entry name" value="PRK10887.1"/>
    <property type="match status" value="1"/>
</dbReference>
<dbReference type="PANTHER" id="PTHR42946:SF1">
    <property type="entry name" value="PHOSPHOGLUCOMUTASE (ALPHA-D-GLUCOSE-1,6-BISPHOSPHATE-DEPENDENT)"/>
    <property type="match status" value="1"/>
</dbReference>
<dbReference type="PANTHER" id="PTHR42946">
    <property type="entry name" value="PHOSPHOHEXOSE MUTASE"/>
    <property type="match status" value="1"/>
</dbReference>
<dbReference type="Pfam" id="PF02878">
    <property type="entry name" value="PGM_PMM_I"/>
    <property type="match status" value="1"/>
</dbReference>
<dbReference type="Pfam" id="PF02879">
    <property type="entry name" value="PGM_PMM_II"/>
    <property type="match status" value="1"/>
</dbReference>
<dbReference type="Pfam" id="PF02880">
    <property type="entry name" value="PGM_PMM_III"/>
    <property type="match status" value="1"/>
</dbReference>
<dbReference type="Pfam" id="PF00408">
    <property type="entry name" value="PGM_PMM_IV"/>
    <property type="match status" value="1"/>
</dbReference>
<dbReference type="PRINTS" id="PR00509">
    <property type="entry name" value="PGMPMM"/>
</dbReference>
<dbReference type="SUPFAM" id="SSF55957">
    <property type="entry name" value="Phosphoglucomutase, C-terminal domain"/>
    <property type="match status" value="1"/>
</dbReference>
<dbReference type="SUPFAM" id="SSF53738">
    <property type="entry name" value="Phosphoglucomutase, first 3 domains"/>
    <property type="match status" value="3"/>
</dbReference>
<comment type="function">
    <text evidence="1">Catalyzes the conversion of glucosamine-6-phosphate to glucosamine-1-phosphate.</text>
</comment>
<comment type="catalytic activity">
    <reaction evidence="1">
        <text>alpha-D-glucosamine 1-phosphate = D-glucosamine 6-phosphate</text>
        <dbReference type="Rhea" id="RHEA:23424"/>
        <dbReference type="ChEBI" id="CHEBI:58516"/>
        <dbReference type="ChEBI" id="CHEBI:58725"/>
        <dbReference type="EC" id="5.4.2.10"/>
    </reaction>
</comment>
<comment type="cofactor">
    <cofactor evidence="1">
        <name>Mg(2+)</name>
        <dbReference type="ChEBI" id="CHEBI:18420"/>
    </cofactor>
    <text evidence="1">Binds 1 Mg(2+) ion per subunit.</text>
</comment>
<comment type="PTM">
    <text evidence="1">Activated by phosphorylation.</text>
</comment>
<comment type="similarity">
    <text evidence="1">Belongs to the phosphohexose mutase family.</text>
</comment>
<evidence type="ECO:0000255" key="1">
    <source>
        <dbReference type="HAMAP-Rule" id="MF_01554"/>
    </source>
</evidence>
<keyword id="KW-0413">Isomerase</keyword>
<keyword id="KW-0460">Magnesium</keyword>
<keyword id="KW-0479">Metal-binding</keyword>
<keyword id="KW-0597">Phosphoprotein</keyword>
<name>GLMM_NITEC</name>
<accession>Q0AHC3</accession>
<feature type="chain" id="PRO_0000301348" description="Phosphoglucosamine mutase">
    <location>
        <begin position="1"/>
        <end position="458"/>
    </location>
</feature>
<feature type="active site" description="Phosphoserine intermediate" evidence="1">
    <location>
        <position position="108"/>
    </location>
</feature>
<feature type="binding site" description="via phosphate group" evidence="1">
    <location>
        <position position="108"/>
    </location>
    <ligand>
        <name>Mg(2+)</name>
        <dbReference type="ChEBI" id="CHEBI:18420"/>
    </ligand>
</feature>
<feature type="binding site" evidence="1">
    <location>
        <position position="247"/>
    </location>
    <ligand>
        <name>Mg(2+)</name>
        <dbReference type="ChEBI" id="CHEBI:18420"/>
    </ligand>
</feature>
<feature type="binding site" evidence="1">
    <location>
        <position position="249"/>
    </location>
    <ligand>
        <name>Mg(2+)</name>
        <dbReference type="ChEBI" id="CHEBI:18420"/>
    </ligand>
</feature>
<feature type="binding site" evidence="1">
    <location>
        <position position="251"/>
    </location>
    <ligand>
        <name>Mg(2+)</name>
        <dbReference type="ChEBI" id="CHEBI:18420"/>
    </ligand>
</feature>
<feature type="modified residue" description="Phosphoserine" evidence="1">
    <location>
        <position position="108"/>
    </location>
</feature>
<protein>
    <recommendedName>
        <fullName evidence="1">Phosphoglucosamine mutase</fullName>
        <ecNumber evidence="1">5.4.2.10</ecNumber>
    </recommendedName>
</protein>
<proteinExistence type="inferred from homology"/>
<organism>
    <name type="scientific">Nitrosomonas eutropha (strain DSM 101675 / C91 / Nm57)</name>
    <dbReference type="NCBI Taxonomy" id="335283"/>
    <lineage>
        <taxon>Bacteria</taxon>
        <taxon>Pseudomonadati</taxon>
        <taxon>Pseudomonadota</taxon>
        <taxon>Betaproteobacteria</taxon>
        <taxon>Nitrosomonadales</taxon>
        <taxon>Nitrosomonadaceae</taxon>
        <taxon>Nitrosomonas</taxon>
    </lineage>
</organism>
<reference key="1">
    <citation type="journal article" date="2007" name="Environ. Microbiol.">
        <title>Whole-genome analysis of the ammonia-oxidizing bacterium, Nitrosomonas eutropha C91: implications for niche adaptation.</title>
        <authorList>
            <person name="Stein L.Y."/>
            <person name="Arp D.J."/>
            <person name="Berube P.M."/>
            <person name="Chain P.S."/>
            <person name="Hauser L."/>
            <person name="Jetten M.S."/>
            <person name="Klotz M.G."/>
            <person name="Larimer F.W."/>
            <person name="Norton J.M."/>
            <person name="Op den Camp H.J.M."/>
            <person name="Shin M."/>
            <person name="Wei X."/>
        </authorList>
    </citation>
    <scope>NUCLEOTIDE SEQUENCE [LARGE SCALE GENOMIC DNA]</scope>
    <source>
        <strain>DSM 101675 / C91 / Nm57</strain>
    </source>
</reference>